<gene>
    <name type="primary">Zbtb32</name>
    <name type="synonym">Rog</name>
    <name type="synonym">Tzfp</name>
</gene>
<accession>Q9JKD9</accession>
<accession>Q9D523</accession>
<proteinExistence type="evidence at protein level"/>
<evidence type="ECO:0000250" key="1"/>
<evidence type="ECO:0000255" key="2">
    <source>
        <dbReference type="PROSITE-ProRule" id="PRU00037"/>
    </source>
</evidence>
<evidence type="ECO:0000255" key="3">
    <source>
        <dbReference type="PROSITE-ProRule" id="PRU00042"/>
    </source>
</evidence>
<evidence type="ECO:0000256" key="4">
    <source>
        <dbReference type="SAM" id="MobiDB-lite"/>
    </source>
</evidence>
<evidence type="ECO:0000269" key="5">
    <source>
    </source>
</evidence>
<evidence type="ECO:0000269" key="6">
    <source>
    </source>
</evidence>
<evidence type="ECO:0000303" key="7">
    <source>
    </source>
</evidence>
<evidence type="ECO:0000305" key="8"/>
<evidence type="ECO:0007829" key="9">
    <source>
        <dbReference type="PDB" id="2KVF"/>
    </source>
</evidence>
<evidence type="ECO:0007829" key="10">
    <source>
        <dbReference type="PDB" id="2KVG"/>
    </source>
</evidence>
<evidence type="ECO:0007829" key="11">
    <source>
        <dbReference type="PDB" id="2KVH"/>
    </source>
</evidence>
<feature type="chain" id="PRO_0000273418" description="Zinc finger and BTB domain-containing protein 32">
    <location>
        <begin position="1"/>
        <end position="465"/>
    </location>
</feature>
<feature type="domain" description="BTB" evidence="2">
    <location>
        <begin position="29"/>
        <end position="87"/>
    </location>
</feature>
<feature type="zinc finger region" description="C2H2-type 1" evidence="3">
    <location>
        <begin position="350"/>
        <end position="372"/>
    </location>
</feature>
<feature type="zinc finger region" description="C2H2-type 2" evidence="3">
    <location>
        <begin position="378"/>
        <end position="400"/>
    </location>
</feature>
<feature type="zinc finger region" description="C2H2-type 3" evidence="3">
    <location>
        <begin position="405"/>
        <end position="427"/>
    </location>
</feature>
<feature type="region of interest" description="Disordered" evidence="4">
    <location>
        <begin position="111"/>
        <end position="179"/>
    </location>
</feature>
<feature type="region of interest" description="Disordered" evidence="4">
    <location>
        <begin position="285"/>
        <end position="310"/>
    </location>
</feature>
<feature type="compositionally biased region" description="Basic and acidic residues" evidence="4">
    <location>
        <begin position="123"/>
        <end position="139"/>
    </location>
</feature>
<feature type="compositionally biased region" description="Basic and acidic residues" evidence="4">
    <location>
        <begin position="147"/>
        <end position="176"/>
    </location>
</feature>
<feature type="splice variant" id="VSP_022552" description="In isoform 2." evidence="7">
    <location>
        <begin position="1"/>
        <end position="364"/>
    </location>
</feature>
<feature type="strand" evidence="9">
    <location>
        <begin position="349"/>
        <end position="351"/>
    </location>
</feature>
<feature type="strand" evidence="9">
    <location>
        <begin position="353"/>
        <end position="355"/>
    </location>
</feature>
<feature type="strand" evidence="9">
    <location>
        <begin position="358"/>
        <end position="360"/>
    </location>
</feature>
<feature type="helix" evidence="9">
    <location>
        <begin position="362"/>
        <end position="369"/>
    </location>
</feature>
<feature type="strand" evidence="11">
    <location>
        <begin position="381"/>
        <end position="384"/>
    </location>
</feature>
<feature type="strand" evidence="11">
    <location>
        <begin position="386"/>
        <end position="389"/>
    </location>
</feature>
<feature type="helix" evidence="11">
    <location>
        <begin position="390"/>
        <end position="399"/>
    </location>
</feature>
<feature type="strand" evidence="10">
    <location>
        <begin position="405"/>
        <end position="407"/>
    </location>
</feature>
<feature type="turn" evidence="10">
    <location>
        <begin position="408"/>
        <end position="411"/>
    </location>
</feature>
<feature type="strand" evidence="10">
    <location>
        <begin position="412"/>
        <end position="415"/>
    </location>
</feature>
<feature type="helix" evidence="10">
    <location>
        <begin position="417"/>
        <end position="424"/>
    </location>
</feature>
<name>ZBT32_MOUSE</name>
<comment type="function">
    <text evidence="1 6">DNA-binding protein that binds to the to a 5'-TGTACAGTGT-3' core sequence. May function as a transcriptional transactivator and transcriptional repressor (By similarity). Probably exerts its repressor effect by preventing GATA3 from binding to DNA. May play a role in regulating the differentiation and activation of helper T-cells.</text>
</comment>
<comment type="subunit">
    <text evidence="1 5">Homodimer (via PTB domain). Interacts with the N-terminal of FANCC. Interacts with ZBTB16 (By similarity). Interacts with GATA3.</text>
</comment>
<comment type="subcellular location">
    <subcellularLocation>
        <location>Nucleus</location>
    </subcellularLocation>
    <text evidence="1">Located in nuclear speckles.</text>
</comment>
<comment type="alternative products">
    <event type="alternative splicing"/>
    <isoform>
        <id>Q9JKD9-1</id>
        <name>1</name>
        <sequence type="displayed"/>
    </isoform>
    <isoform>
        <id>Q9JKD9-2</id>
        <name>2</name>
        <sequence type="described" ref="VSP_022552"/>
    </isoform>
</comment>
<comment type="tissue specificity">
    <text evidence="5">Isoform 1 is testis-specific and is not expressed in lymphoid organs such as thymus or spleen. Isoform 2 is expressed in both B- and T-lymphoid cells.</text>
</comment>
<comment type="domain">
    <text>The C-terminal zinc finger domain functions as a transcriptional transactivator.</text>
</comment>
<comment type="domain">
    <text>The BTB (POZ) domain possesses repressor activity.</text>
</comment>
<comment type="similarity">
    <text evidence="8">Belongs to the krueppel C2H2-type zinc-finger protein family.</text>
</comment>
<organism>
    <name type="scientific">Mus musculus</name>
    <name type="common">Mouse</name>
    <dbReference type="NCBI Taxonomy" id="10090"/>
    <lineage>
        <taxon>Eukaryota</taxon>
        <taxon>Metazoa</taxon>
        <taxon>Chordata</taxon>
        <taxon>Craniata</taxon>
        <taxon>Vertebrata</taxon>
        <taxon>Euteleostomi</taxon>
        <taxon>Mammalia</taxon>
        <taxon>Eutheria</taxon>
        <taxon>Euarchontoglires</taxon>
        <taxon>Glires</taxon>
        <taxon>Rodentia</taxon>
        <taxon>Myomorpha</taxon>
        <taxon>Muroidea</taxon>
        <taxon>Muridae</taxon>
        <taxon>Murinae</taxon>
        <taxon>Mus</taxon>
        <taxon>Mus</taxon>
    </lineage>
</organism>
<protein>
    <recommendedName>
        <fullName>Zinc finger and BTB domain-containing protein 32</fullName>
    </recommendedName>
    <alternativeName>
        <fullName>Repressor of GATA</fullName>
    </alternativeName>
    <alternativeName>
        <fullName>Testis zinc finger protein</fullName>
    </alternativeName>
</protein>
<reference key="1">
    <citation type="journal article" date="2000" name="Immunity">
        <title>ROG, repressor of GATA, regulates the expression of cytokine genes.</title>
        <authorList>
            <person name="Miaw S.-C."/>
            <person name="Choi A."/>
            <person name="Yu E."/>
            <person name="Kishikawa H."/>
            <person name="Ho I.-C."/>
        </authorList>
    </citation>
    <scope>NUCLEOTIDE SEQUENCE [MRNA] (ISOFORM 1)</scope>
    <scope>TISSUE SPECIFICITY</scope>
    <scope>INTERACTION WITH GATA3</scope>
</reference>
<reference key="2">
    <citation type="journal article" date="2001" name="J. Biol. Chem.">
        <title>The zinc finger domain of Tzfp binds to the tbs motif located at the upstream flanking region of the Aie1 (aurora-C) kinase gene.</title>
        <authorList>
            <person name="Tang C.J."/>
            <person name="Chuang C.K."/>
            <person name="Hu H.M."/>
            <person name="Tang T.K."/>
        </authorList>
    </citation>
    <scope>NUCLEOTIDE SEQUENCE [GENOMIC DNA] (ISOFORM 1)</scope>
    <scope>FUNCTION</scope>
    <source>
        <strain>129/SvJ</strain>
        <tissue>Testis</tissue>
    </source>
</reference>
<reference key="3">
    <citation type="journal article" date="2005" name="Science">
        <title>The transcriptional landscape of the mammalian genome.</title>
        <authorList>
            <person name="Carninci P."/>
            <person name="Kasukawa T."/>
            <person name="Katayama S."/>
            <person name="Gough J."/>
            <person name="Frith M.C."/>
            <person name="Maeda N."/>
            <person name="Oyama R."/>
            <person name="Ravasi T."/>
            <person name="Lenhard B."/>
            <person name="Wells C."/>
            <person name="Kodzius R."/>
            <person name="Shimokawa K."/>
            <person name="Bajic V.B."/>
            <person name="Brenner S.E."/>
            <person name="Batalov S."/>
            <person name="Forrest A.R."/>
            <person name="Zavolan M."/>
            <person name="Davis M.J."/>
            <person name="Wilming L.G."/>
            <person name="Aidinis V."/>
            <person name="Allen J.E."/>
            <person name="Ambesi-Impiombato A."/>
            <person name="Apweiler R."/>
            <person name="Aturaliya R.N."/>
            <person name="Bailey T.L."/>
            <person name="Bansal M."/>
            <person name="Baxter L."/>
            <person name="Beisel K.W."/>
            <person name="Bersano T."/>
            <person name="Bono H."/>
            <person name="Chalk A.M."/>
            <person name="Chiu K.P."/>
            <person name="Choudhary V."/>
            <person name="Christoffels A."/>
            <person name="Clutterbuck D.R."/>
            <person name="Crowe M.L."/>
            <person name="Dalla E."/>
            <person name="Dalrymple B.P."/>
            <person name="de Bono B."/>
            <person name="Della Gatta G."/>
            <person name="di Bernardo D."/>
            <person name="Down T."/>
            <person name="Engstrom P."/>
            <person name="Fagiolini M."/>
            <person name="Faulkner G."/>
            <person name="Fletcher C.F."/>
            <person name="Fukushima T."/>
            <person name="Furuno M."/>
            <person name="Futaki S."/>
            <person name="Gariboldi M."/>
            <person name="Georgii-Hemming P."/>
            <person name="Gingeras T.R."/>
            <person name="Gojobori T."/>
            <person name="Green R.E."/>
            <person name="Gustincich S."/>
            <person name="Harbers M."/>
            <person name="Hayashi Y."/>
            <person name="Hensch T.K."/>
            <person name="Hirokawa N."/>
            <person name="Hill D."/>
            <person name="Huminiecki L."/>
            <person name="Iacono M."/>
            <person name="Ikeo K."/>
            <person name="Iwama A."/>
            <person name="Ishikawa T."/>
            <person name="Jakt M."/>
            <person name="Kanapin A."/>
            <person name="Katoh M."/>
            <person name="Kawasawa Y."/>
            <person name="Kelso J."/>
            <person name="Kitamura H."/>
            <person name="Kitano H."/>
            <person name="Kollias G."/>
            <person name="Krishnan S.P."/>
            <person name="Kruger A."/>
            <person name="Kummerfeld S.K."/>
            <person name="Kurochkin I.V."/>
            <person name="Lareau L.F."/>
            <person name="Lazarevic D."/>
            <person name="Lipovich L."/>
            <person name="Liu J."/>
            <person name="Liuni S."/>
            <person name="McWilliam S."/>
            <person name="Madan Babu M."/>
            <person name="Madera M."/>
            <person name="Marchionni L."/>
            <person name="Matsuda H."/>
            <person name="Matsuzawa S."/>
            <person name="Miki H."/>
            <person name="Mignone F."/>
            <person name="Miyake S."/>
            <person name="Morris K."/>
            <person name="Mottagui-Tabar S."/>
            <person name="Mulder N."/>
            <person name="Nakano N."/>
            <person name="Nakauchi H."/>
            <person name="Ng P."/>
            <person name="Nilsson R."/>
            <person name="Nishiguchi S."/>
            <person name="Nishikawa S."/>
            <person name="Nori F."/>
            <person name="Ohara O."/>
            <person name="Okazaki Y."/>
            <person name="Orlando V."/>
            <person name="Pang K.C."/>
            <person name="Pavan W.J."/>
            <person name="Pavesi G."/>
            <person name="Pesole G."/>
            <person name="Petrovsky N."/>
            <person name="Piazza S."/>
            <person name="Reed J."/>
            <person name="Reid J.F."/>
            <person name="Ring B.Z."/>
            <person name="Ringwald M."/>
            <person name="Rost B."/>
            <person name="Ruan Y."/>
            <person name="Salzberg S.L."/>
            <person name="Sandelin A."/>
            <person name="Schneider C."/>
            <person name="Schoenbach C."/>
            <person name="Sekiguchi K."/>
            <person name="Semple C.A."/>
            <person name="Seno S."/>
            <person name="Sessa L."/>
            <person name="Sheng Y."/>
            <person name="Shibata Y."/>
            <person name="Shimada H."/>
            <person name="Shimada K."/>
            <person name="Silva D."/>
            <person name="Sinclair B."/>
            <person name="Sperling S."/>
            <person name="Stupka E."/>
            <person name="Sugiura K."/>
            <person name="Sultana R."/>
            <person name="Takenaka Y."/>
            <person name="Taki K."/>
            <person name="Tammoja K."/>
            <person name="Tan S.L."/>
            <person name="Tang S."/>
            <person name="Taylor M.S."/>
            <person name="Tegner J."/>
            <person name="Teichmann S.A."/>
            <person name="Ueda H.R."/>
            <person name="van Nimwegen E."/>
            <person name="Verardo R."/>
            <person name="Wei C.L."/>
            <person name="Yagi K."/>
            <person name="Yamanishi H."/>
            <person name="Zabarovsky E."/>
            <person name="Zhu S."/>
            <person name="Zimmer A."/>
            <person name="Hide W."/>
            <person name="Bult C."/>
            <person name="Grimmond S.M."/>
            <person name="Teasdale R.D."/>
            <person name="Liu E.T."/>
            <person name="Brusic V."/>
            <person name="Quackenbush J."/>
            <person name="Wahlestedt C."/>
            <person name="Mattick J.S."/>
            <person name="Hume D.A."/>
            <person name="Kai C."/>
            <person name="Sasaki D."/>
            <person name="Tomaru Y."/>
            <person name="Fukuda S."/>
            <person name="Kanamori-Katayama M."/>
            <person name="Suzuki M."/>
            <person name="Aoki J."/>
            <person name="Arakawa T."/>
            <person name="Iida J."/>
            <person name="Imamura K."/>
            <person name="Itoh M."/>
            <person name="Kato T."/>
            <person name="Kawaji H."/>
            <person name="Kawagashira N."/>
            <person name="Kawashima T."/>
            <person name="Kojima M."/>
            <person name="Kondo S."/>
            <person name="Konno H."/>
            <person name="Nakano K."/>
            <person name="Ninomiya N."/>
            <person name="Nishio T."/>
            <person name="Okada M."/>
            <person name="Plessy C."/>
            <person name="Shibata K."/>
            <person name="Shiraki T."/>
            <person name="Suzuki S."/>
            <person name="Tagami M."/>
            <person name="Waki K."/>
            <person name="Watahiki A."/>
            <person name="Okamura-Oho Y."/>
            <person name="Suzuki H."/>
            <person name="Kawai J."/>
            <person name="Hayashizaki Y."/>
        </authorList>
    </citation>
    <scope>NUCLEOTIDE SEQUENCE [LARGE SCALE MRNA] (ISOFORM 2)</scope>
    <source>
        <strain>C57BL/6J</strain>
        <tissue>Testis</tissue>
    </source>
</reference>
<reference key="4">
    <citation type="journal article" date="2010" name="Proteins">
        <title>Structure and DNA binding characteristics of the three-Cys2His2 domain of mouse testis zinc finger protein.</title>
        <authorList>
            <person name="Chou C.C."/>
            <person name="Lou Y.C."/>
            <person name="Tang T.K."/>
            <person name="Chen C."/>
        </authorList>
    </citation>
    <scope>STRUCTURE BY NMR OF 348-428</scope>
    <scope>DNA-BINDING</scope>
    <scope>ZINC-BINDING</scope>
</reference>
<dbReference type="EMBL" id="AF241232">
    <property type="protein sequence ID" value="AAF61244.1"/>
    <property type="molecule type" value="mRNA"/>
</dbReference>
<dbReference type="EMBL" id="AY015272">
    <property type="protein sequence ID" value="AAK13198.1"/>
    <property type="molecule type" value="Genomic_DNA"/>
</dbReference>
<dbReference type="EMBL" id="AK015881">
    <property type="protein sequence ID" value="BAB30015.1"/>
    <property type="molecule type" value="mRNA"/>
</dbReference>
<dbReference type="CCDS" id="CCDS21102.1">
    <molecule id="Q9JKD9-1"/>
</dbReference>
<dbReference type="RefSeq" id="NP_067372.2">
    <property type="nucleotide sequence ID" value="NM_021397.2"/>
</dbReference>
<dbReference type="PDB" id="2KVF">
    <property type="method" value="NMR"/>
    <property type="chains" value="A=348-374"/>
</dbReference>
<dbReference type="PDB" id="2KVG">
    <property type="method" value="NMR"/>
    <property type="chains" value="A=402-428"/>
</dbReference>
<dbReference type="PDB" id="2KVH">
    <property type="method" value="NMR"/>
    <property type="chains" value="A=375-401"/>
</dbReference>
<dbReference type="PDBsum" id="2KVF"/>
<dbReference type="PDBsum" id="2KVG"/>
<dbReference type="PDBsum" id="2KVH"/>
<dbReference type="BMRB" id="Q9JKD9"/>
<dbReference type="SMR" id="Q9JKD9"/>
<dbReference type="BioGRID" id="208389">
    <property type="interactions" value="1"/>
</dbReference>
<dbReference type="CORUM" id="Q9JKD9"/>
<dbReference type="FunCoup" id="Q9JKD9">
    <property type="interactions" value="650"/>
</dbReference>
<dbReference type="STRING" id="10090.ENSMUSP00000103786"/>
<dbReference type="GlyGen" id="Q9JKD9">
    <property type="glycosylation" value="1 site"/>
</dbReference>
<dbReference type="iPTMnet" id="Q9JKD9"/>
<dbReference type="PhosphoSitePlus" id="Q9JKD9"/>
<dbReference type="PaxDb" id="10090-ENSMUSP00000103786"/>
<dbReference type="ProteomicsDB" id="275053">
    <molecule id="Q9JKD9-1"/>
</dbReference>
<dbReference type="ProteomicsDB" id="275054">
    <molecule id="Q9JKD9-2"/>
</dbReference>
<dbReference type="Antibodypedia" id="35117">
    <property type="antibodies" value="176 antibodies from 24 providers"/>
</dbReference>
<dbReference type="DNASU" id="58206"/>
<dbReference type="Ensembl" id="ENSMUST00000108150.2">
    <molecule id="Q9JKD9-2"/>
    <property type="protein sequence ID" value="ENSMUSP00000103785.2"/>
    <property type="gene ID" value="ENSMUSG00000006310.11"/>
</dbReference>
<dbReference type="GeneID" id="58206"/>
<dbReference type="KEGG" id="mmu:58206"/>
<dbReference type="UCSC" id="uc009gfi.1">
    <molecule id="Q9JKD9-2"/>
    <property type="organism name" value="mouse"/>
</dbReference>
<dbReference type="AGR" id="MGI:1891838"/>
<dbReference type="CTD" id="27033"/>
<dbReference type="MGI" id="MGI:1891838">
    <property type="gene designation" value="Zbtb32"/>
</dbReference>
<dbReference type="VEuPathDB" id="HostDB:ENSMUSG00000006310"/>
<dbReference type="eggNOG" id="KOG1721">
    <property type="taxonomic scope" value="Eukaryota"/>
</dbReference>
<dbReference type="GeneTree" id="ENSGT00940000162716"/>
<dbReference type="HOGENOM" id="CLU_002678_42_18_1"/>
<dbReference type="InParanoid" id="Q9JKD9"/>
<dbReference type="OrthoDB" id="8922241at2759"/>
<dbReference type="PhylomeDB" id="Q9JKD9"/>
<dbReference type="BioGRID-ORCS" id="58206">
    <property type="hits" value="8 hits in 79 CRISPR screens"/>
</dbReference>
<dbReference type="ChiTaRS" id="Zbtb32">
    <property type="organism name" value="mouse"/>
</dbReference>
<dbReference type="EvolutionaryTrace" id="Q9JKD9"/>
<dbReference type="PRO" id="PR:Q9JKD9"/>
<dbReference type="Proteomes" id="UP000000589">
    <property type="component" value="Chromosome 7"/>
</dbReference>
<dbReference type="RNAct" id="Q9JKD9">
    <property type="molecule type" value="protein"/>
</dbReference>
<dbReference type="Bgee" id="ENSMUSG00000006310">
    <property type="expression patterns" value="Expressed in spermatocyte and 65 other cell types or tissues"/>
</dbReference>
<dbReference type="ExpressionAtlas" id="Q9JKD9">
    <property type="expression patterns" value="baseline and differential"/>
</dbReference>
<dbReference type="GO" id="GO:0000228">
    <property type="term" value="C:nuclear chromosome"/>
    <property type="evidence" value="ECO:0000314"/>
    <property type="project" value="MGI"/>
</dbReference>
<dbReference type="GO" id="GO:0003677">
    <property type="term" value="F:DNA binding"/>
    <property type="evidence" value="ECO:0000314"/>
    <property type="project" value="UniProtKB"/>
</dbReference>
<dbReference type="GO" id="GO:0003714">
    <property type="term" value="F:transcription corepressor activity"/>
    <property type="evidence" value="ECO:0000314"/>
    <property type="project" value="MGI"/>
</dbReference>
<dbReference type="GO" id="GO:0008270">
    <property type="term" value="F:zinc ion binding"/>
    <property type="evidence" value="ECO:0000314"/>
    <property type="project" value="UniProtKB"/>
</dbReference>
<dbReference type="GO" id="GO:0030097">
    <property type="term" value="P:hemopoiesis"/>
    <property type="evidence" value="ECO:0000315"/>
    <property type="project" value="MGI"/>
</dbReference>
<dbReference type="GO" id="GO:0001817">
    <property type="term" value="P:regulation of cytokine production"/>
    <property type="evidence" value="ECO:0000315"/>
    <property type="project" value="MGI"/>
</dbReference>
<dbReference type="GO" id="GO:0042098">
    <property type="term" value="P:T cell proliferation"/>
    <property type="evidence" value="ECO:0000315"/>
    <property type="project" value="MGI"/>
</dbReference>
<dbReference type="FunFam" id="3.30.160.60:FF:000553">
    <property type="entry name" value="Zinc finger and BTB domain-containing protein 16"/>
    <property type="match status" value="1"/>
</dbReference>
<dbReference type="FunFam" id="3.30.160.60:FF:001279">
    <property type="entry name" value="zinc finger and BTB domain-containing protein 32"/>
    <property type="match status" value="1"/>
</dbReference>
<dbReference type="Gene3D" id="3.30.160.60">
    <property type="entry name" value="Classic Zinc Finger"/>
    <property type="match status" value="2"/>
</dbReference>
<dbReference type="Gene3D" id="3.30.710.10">
    <property type="entry name" value="Potassium Channel Kv1.1, Chain A"/>
    <property type="match status" value="1"/>
</dbReference>
<dbReference type="InterPro" id="IPR000210">
    <property type="entry name" value="BTB/POZ_dom"/>
</dbReference>
<dbReference type="InterPro" id="IPR011333">
    <property type="entry name" value="SKP1/BTB/POZ_sf"/>
</dbReference>
<dbReference type="InterPro" id="IPR036236">
    <property type="entry name" value="Znf_C2H2_sf"/>
</dbReference>
<dbReference type="InterPro" id="IPR013087">
    <property type="entry name" value="Znf_C2H2_type"/>
</dbReference>
<dbReference type="PANTHER" id="PTHR24394:SF29">
    <property type="entry name" value="MYONEURIN"/>
    <property type="match status" value="1"/>
</dbReference>
<dbReference type="PANTHER" id="PTHR24394">
    <property type="entry name" value="ZINC FINGER PROTEIN"/>
    <property type="match status" value="1"/>
</dbReference>
<dbReference type="Pfam" id="PF00651">
    <property type="entry name" value="BTB"/>
    <property type="match status" value="1"/>
</dbReference>
<dbReference type="Pfam" id="PF00096">
    <property type="entry name" value="zf-C2H2"/>
    <property type="match status" value="1"/>
</dbReference>
<dbReference type="Pfam" id="PF12874">
    <property type="entry name" value="zf-met"/>
    <property type="match status" value="1"/>
</dbReference>
<dbReference type="SMART" id="SM00225">
    <property type="entry name" value="BTB"/>
    <property type="match status" value="1"/>
</dbReference>
<dbReference type="SMART" id="SM00355">
    <property type="entry name" value="ZnF_C2H2"/>
    <property type="match status" value="3"/>
</dbReference>
<dbReference type="SUPFAM" id="SSF57667">
    <property type="entry name" value="beta-beta-alpha zinc fingers"/>
    <property type="match status" value="1"/>
</dbReference>
<dbReference type="SUPFAM" id="SSF54695">
    <property type="entry name" value="POZ domain"/>
    <property type="match status" value="1"/>
</dbReference>
<dbReference type="PROSITE" id="PS50097">
    <property type="entry name" value="BTB"/>
    <property type="match status" value="1"/>
</dbReference>
<dbReference type="PROSITE" id="PS00028">
    <property type="entry name" value="ZINC_FINGER_C2H2_1"/>
    <property type="match status" value="2"/>
</dbReference>
<dbReference type="PROSITE" id="PS50157">
    <property type="entry name" value="ZINC_FINGER_C2H2_2"/>
    <property type="match status" value="1"/>
</dbReference>
<sequence length="465" mass="50828">MPQTPTRLVSPYGSDRLVQLAARLRPALCDTLITVGGLEFPAHSLVLAGASPRLGCRGRWALVEDISPSTFAQILTFVYGESIELQPGELGDLEEAAKALGVQALEEACQRAQKGKDEDELDPGLKRHQQSEDFMRGSERGLGSPGEKQKPEKDFRSNGREQEMSHKHKAPGERPEMAGATRMMSSEEVMRGIESHKGSEESLRGCPDPLSPPGSLLTSLIPRPWWAEVPRLGEGQSALWSILLWPSRYGAPFSHSTPITAAWQVRPQDQRIPLTLNHSKALWSQNQLASSSPTPGSFPQGTESLSPWQIETSGQGFTGTLATCVSQERTLNCPSHQHPPLPSPARSRPYSCSVCGKRFSLKHQMETHYRVHTGEKPFSCSLCPQRSRDFSAMTKHLRTHGAAPYRCPLCRAGCPSLASMQAHMRGHSPSRLPPGWTIRSTFLYSSSRPTRASSSPGSPTSSAAT</sequence>
<keyword id="KW-0002">3D-structure</keyword>
<keyword id="KW-0025">Alternative splicing</keyword>
<keyword id="KW-0479">Metal-binding</keyword>
<keyword id="KW-0539">Nucleus</keyword>
<keyword id="KW-1185">Reference proteome</keyword>
<keyword id="KW-0677">Repeat</keyword>
<keyword id="KW-0678">Repressor</keyword>
<keyword id="KW-0804">Transcription</keyword>
<keyword id="KW-0805">Transcription regulation</keyword>
<keyword id="KW-0862">Zinc</keyword>
<keyword id="KW-0863">Zinc-finger</keyword>